<feature type="chain" id="PRO_0000386803" description="Ribosomal RNA small subunit methyltransferase H">
    <location>
        <begin position="1"/>
        <end position="301"/>
    </location>
</feature>
<feature type="binding site" evidence="1">
    <location>
        <begin position="35"/>
        <end position="37"/>
    </location>
    <ligand>
        <name>S-adenosyl-L-methionine</name>
        <dbReference type="ChEBI" id="CHEBI:59789"/>
    </ligand>
</feature>
<feature type="binding site" evidence="1">
    <location>
        <position position="55"/>
    </location>
    <ligand>
        <name>S-adenosyl-L-methionine</name>
        <dbReference type="ChEBI" id="CHEBI:59789"/>
    </ligand>
</feature>
<feature type="binding site" evidence="1">
    <location>
        <position position="84"/>
    </location>
    <ligand>
        <name>S-adenosyl-L-methionine</name>
        <dbReference type="ChEBI" id="CHEBI:59789"/>
    </ligand>
</feature>
<feature type="binding site" evidence="1">
    <location>
        <position position="105"/>
    </location>
    <ligand>
        <name>S-adenosyl-L-methionine</name>
        <dbReference type="ChEBI" id="CHEBI:59789"/>
    </ligand>
</feature>
<feature type="binding site" evidence="1">
    <location>
        <position position="112"/>
    </location>
    <ligand>
        <name>S-adenosyl-L-methionine</name>
        <dbReference type="ChEBI" id="CHEBI:59789"/>
    </ligand>
</feature>
<reference key="1">
    <citation type="journal article" date="2011" name="BMC Genomics">
        <title>Complete genome sequence of the filamentous anoxygenic phototrophic bacterium Chloroflexus aurantiacus.</title>
        <authorList>
            <person name="Tang K.H."/>
            <person name="Barry K."/>
            <person name="Chertkov O."/>
            <person name="Dalin E."/>
            <person name="Han C.S."/>
            <person name="Hauser L.J."/>
            <person name="Honchak B.M."/>
            <person name="Karbach L.E."/>
            <person name="Land M.L."/>
            <person name="Lapidus A."/>
            <person name="Larimer F.W."/>
            <person name="Mikhailova N."/>
            <person name="Pitluck S."/>
            <person name="Pierson B.K."/>
            <person name="Blankenship R.E."/>
        </authorList>
    </citation>
    <scope>NUCLEOTIDE SEQUENCE [LARGE SCALE GENOMIC DNA]</scope>
    <source>
        <strain>ATCC 29366 / DSM 635 / J-10-fl</strain>
    </source>
</reference>
<organism>
    <name type="scientific">Chloroflexus aurantiacus (strain ATCC 29366 / DSM 635 / J-10-fl)</name>
    <dbReference type="NCBI Taxonomy" id="324602"/>
    <lineage>
        <taxon>Bacteria</taxon>
        <taxon>Bacillati</taxon>
        <taxon>Chloroflexota</taxon>
        <taxon>Chloroflexia</taxon>
        <taxon>Chloroflexales</taxon>
        <taxon>Chloroflexineae</taxon>
        <taxon>Chloroflexaceae</taxon>
        <taxon>Chloroflexus</taxon>
    </lineage>
</organism>
<gene>
    <name evidence="1" type="primary">rsmH</name>
    <name type="synonym">mraW</name>
    <name type="ordered locus">Caur_0763</name>
</gene>
<accession>A9WG80</accession>
<dbReference type="EC" id="2.1.1.199" evidence="1"/>
<dbReference type="EMBL" id="CP000909">
    <property type="protein sequence ID" value="ABY34001.1"/>
    <property type="molecule type" value="Genomic_DNA"/>
</dbReference>
<dbReference type="RefSeq" id="WP_012256657.1">
    <property type="nucleotide sequence ID" value="NC_010175.1"/>
</dbReference>
<dbReference type="RefSeq" id="YP_001634390.1">
    <property type="nucleotide sequence ID" value="NC_010175.1"/>
</dbReference>
<dbReference type="SMR" id="A9WG80"/>
<dbReference type="FunCoup" id="A9WG80">
    <property type="interactions" value="425"/>
</dbReference>
<dbReference type="STRING" id="324602.Caur_0763"/>
<dbReference type="EnsemblBacteria" id="ABY34001">
    <property type="protein sequence ID" value="ABY34001"/>
    <property type="gene ID" value="Caur_0763"/>
</dbReference>
<dbReference type="KEGG" id="cau:Caur_0763"/>
<dbReference type="PATRIC" id="fig|324602.8.peg.868"/>
<dbReference type="eggNOG" id="COG0275">
    <property type="taxonomic scope" value="Bacteria"/>
</dbReference>
<dbReference type="HOGENOM" id="CLU_038422_3_0_0"/>
<dbReference type="InParanoid" id="A9WG80"/>
<dbReference type="Proteomes" id="UP000002008">
    <property type="component" value="Chromosome"/>
</dbReference>
<dbReference type="GO" id="GO:0005737">
    <property type="term" value="C:cytoplasm"/>
    <property type="evidence" value="ECO:0000318"/>
    <property type="project" value="GO_Central"/>
</dbReference>
<dbReference type="GO" id="GO:0071424">
    <property type="term" value="F:rRNA (cytosine-N4-)-methyltransferase activity"/>
    <property type="evidence" value="ECO:0000318"/>
    <property type="project" value="GO_Central"/>
</dbReference>
<dbReference type="GO" id="GO:0070475">
    <property type="term" value="P:rRNA base methylation"/>
    <property type="evidence" value="ECO:0000318"/>
    <property type="project" value="GO_Central"/>
</dbReference>
<dbReference type="FunFam" id="1.10.150.170:FF:000003">
    <property type="entry name" value="Ribosomal RNA small subunit methyltransferase H"/>
    <property type="match status" value="1"/>
</dbReference>
<dbReference type="Gene3D" id="1.10.150.170">
    <property type="entry name" value="Putative methyltransferase TM0872, insert domain"/>
    <property type="match status" value="1"/>
</dbReference>
<dbReference type="Gene3D" id="3.40.50.150">
    <property type="entry name" value="Vaccinia Virus protein VP39"/>
    <property type="match status" value="1"/>
</dbReference>
<dbReference type="HAMAP" id="MF_01007">
    <property type="entry name" value="16SrRNA_methyltr_H"/>
    <property type="match status" value="1"/>
</dbReference>
<dbReference type="InterPro" id="IPR002903">
    <property type="entry name" value="RsmH"/>
</dbReference>
<dbReference type="InterPro" id="IPR023397">
    <property type="entry name" value="SAM-dep_MeTrfase_MraW_recog"/>
</dbReference>
<dbReference type="InterPro" id="IPR029063">
    <property type="entry name" value="SAM-dependent_MTases_sf"/>
</dbReference>
<dbReference type="NCBIfam" id="TIGR00006">
    <property type="entry name" value="16S rRNA (cytosine(1402)-N(4))-methyltransferase RsmH"/>
    <property type="match status" value="1"/>
</dbReference>
<dbReference type="PANTHER" id="PTHR11265:SF0">
    <property type="entry name" value="12S RRNA N4-METHYLCYTIDINE METHYLTRANSFERASE"/>
    <property type="match status" value="1"/>
</dbReference>
<dbReference type="PANTHER" id="PTHR11265">
    <property type="entry name" value="S-ADENOSYL-METHYLTRANSFERASE MRAW"/>
    <property type="match status" value="1"/>
</dbReference>
<dbReference type="Pfam" id="PF01795">
    <property type="entry name" value="Methyltransf_5"/>
    <property type="match status" value="1"/>
</dbReference>
<dbReference type="PIRSF" id="PIRSF004486">
    <property type="entry name" value="MraW"/>
    <property type="match status" value="1"/>
</dbReference>
<dbReference type="SUPFAM" id="SSF81799">
    <property type="entry name" value="Putative methyltransferase TM0872, insert domain"/>
    <property type="match status" value="1"/>
</dbReference>
<dbReference type="SUPFAM" id="SSF53335">
    <property type="entry name" value="S-adenosyl-L-methionine-dependent methyltransferases"/>
    <property type="match status" value="1"/>
</dbReference>
<protein>
    <recommendedName>
        <fullName evidence="1">Ribosomal RNA small subunit methyltransferase H</fullName>
        <ecNumber evidence="1">2.1.1.199</ecNumber>
    </recommendedName>
    <alternativeName>
        <fullName evidence="1">16S rRNA m(4)C1402 methyltransferase</fullName>
    </alternativeName>
    <alternativeName>
        <fullName evidence="1">rRNA (cytosine-N(4)-)-methyltransferase RsmH</fullName>
    </alternativeName>
</protein>
<keyword id="KW-0963">Cytoplasm</keyword>
<keyword id="KW-0489">Methyltransferase</keyword>
<keyword id="KW-1185">Reference proteome</keyword>
<keyword id="KW-0698">rRNA processing</keyword>
<keyword id="KW-0949">S-adenosyl-L-methionine</keyword>
<keyword id="KW-0808">Transferase</keyword>
<sequence length="301" mass="32052">MAVTFQHTPVLLTEVLTMLAPRPAGQYLDATVGGGGHALAVLQAAQPGGRLLGIDADPAALAATAARLQAAGLIEQAVLCHGSFADLATLAATAGFGAFDGILFDLGVSSYQLDTPERGFSFTADGPLDMRLDPTQGLTAADMVNRLSERELADIIFLYGEEHAARRIARAIVEHRRTQPFQRTAELAEVVARAVGGRHGRIHPATRTFQALRIAVNQELDRLRATLPQAVDLLAPGGRLAVISFHSLEDRIVKQFLRAEASGETPRLTIVTKKPIVPTAAEVANNPRARSAKLRVATRIG</sequence>
<proteinExistence type="inferred from homology"/>
<evidence type="ECO:0000255" key="1">
    <source>
        <dbReference type="HAMAP-Rule" id="MF_01007"/>
    </source>
</evidence>
<comment type="function">
    <text evidence="1">Specifically methylates the N4 position of cytidine in position 1402 (C1402) of 16S rRNA.</text>
</comment>
<comment type="catalytic activity">
    <reaction evidence="1">
        <text>cytidine(1402) in 16S rRNA + S-adenosyl-L-methionine = N(4)-methylcytidine(1402) in 16S rRNA + S-adenosyl-L-homocysteine + H(+)</text>
        <dbReference type="Rhea" id="RHEA:42928"/>
        <dbReference type="Rhea" id="RHEA-COMP:10286"/>
        <dbReference type="Rhea" id="RHEA-COMP:10287"/>
        <dbReference type="ChEBI" id="CHEBI:15378"/>
        <dbReference type="ChEBI" id="CHEBI:57856"/>
        <dbReference type="ChEBI" id="CHEBI:59789"/>
        <dbReference type="ChEBI" id="CHEBI:74506"/>
        <dbReference type="ChEBI" id="CHEBI:82748"/>
        <dbReference type="EC" id="2.1.1.199"/>
    </reaction>
</comment>
<comment type="subcellular location">
    <subcellularLocation>
        <location evidence="1">Cytoplasm</location>
    </subcellularLocation>
</comment>
<comment type="similarity">
    <text evidence="1">Belongs to the methyltransferase superfamily. RsmH family.</text>
</comment>
<name>RSMH_CHLAA</name>